<accession>A0A5Q0QMX0</accession>
<gene>
    <name evidence="5" type="primary">Agr9</name>
</gene>
<name>AGR9_CYCAE</name>
<dbReference type="EC" id="4.2.3.-" evidence="4"/>
<dbReference type="EC" id="4.2.3.126" evidence="4"/>
<dbReference type="EMBL" id="MN146032">
    <property type="protein sequence ID" value="QGA30885.1"/>
    <property type="molecule type" value="Genomic_DNA"/>
</dbReference>
<dbReference type="SMR" id="A0A5Q0QMX0"/>
<dbReference type="OrthoDB" id="6486656at2759"/>
<dbReference type="GO" id="GO:0046872">
    <property type="term" value="F:metal ion binding"/>
    <property type="evidence" value="ECO:0007669"/>
    <property type="project" value="UniProtKB-KW"/>
</dbReference>
<dbReference type="GO" id="GO:0010333">
    <property type="term" value="F:terpene synthase activity"/>
    <property type="evidence" value="ECO:0007669"/>
    <property type="project" value="InterPro"/>
</dbReference>
<dbReference type="GO" id="GO:0008299">
    <property type="term" value="P:isoprenoid biosynthetic process"/>
    <property type="evidence" value="ECO:0007669"/>
    <property type="project" value="UniProtKB-ARBA"/>
</dbReference>
<dbReference type="Gene3D" id="1.10.600.10">
    <property type="entry name" value="Farnesyl Diphosphate Synthase"/>
    <property type="match status" value="1"/>
</dbReference>
<dbReference type="InterPro" id="IPR008949">
    <property type="entry name" value="Isoprenoid_synthase_dom_sf"/>
</dbReference>
<dbReference type="InterPro" id="IPR034686">
    <property type="entry name" value="Terpene_cyclase-like_2"/>
</dbReference>
<dbReference type="PANTHER" id="PTHR35201:SF4">
    <property type="entry name" value="BETA-PINACENE SYNTHASE-RELATED"/>
    <property type="match status" value="1"/>
</dbReference>
<dbReference type="PANTHER" id="PTHR35201">
    <property type="entry name" value="TERPENE SYNTHASE"/>
    <property type="match status" value="1"/>
</dbReference>
<dbReference type="Pfam" id="PF19086">
    <property type="entry name" value="Terpene_syn_C_2"/>
    <property type="match status" value="1"/>
</dbReference>
<dbReference type="SFLD" id="SFLDS00005">
    <property type="entry name" value="Isoprenoid_Synthase_Type_I"/>
    <property type="match status" value="1"/>
</dbReference>
<dbReference type="SFLD" id="SFLDG01020">
    <property type="entry name" value="Terpene_Cyclase_Like_2"/>
    <property type="match status" value="1"/>
</dbReference>
<dbReference type="SUPFAM" id="SSF48576">
    <property type="entry name" value="Terpenoid synthases"/>
    <property type="match status" value="1"/>
</dbReference>
<keyword id="KW-0456">Lyase</keyword>
<keyword id="KW-0460">Magnesium</keyword>
<keyword id="KW-0479">Metal-binding</keyword>
<organism>
    <name type="scientific">Cyclocybe aegerita</name>
    <name type="common">Black poplar mushroom</name>
    <name type="synonym">Agrocybe aegerita</name>
    <dbReference type="NCBI Taxonomy" id="1973307"/>
    <lineage>
        <taxon>Eukaryota</taxon>
        <taxon>Fungi</taxon>
        <taxon>Dikarya</taxon>
        <taxon>Basidiomycota</taxon>
        <taxon>Agaricomycotina</taxon>
        <taxon>Agaricomycetes</taxon>
        <taxon>Agaricomycetidae</taxon>
        <taxon>Agaricales</taxon>
        <taxon>Agaricineae</taxon>
        <taxon>Bolbitiaceae</taxon>
        <taxon>Cyclocybe</taxon>
    </lineage>
</organism>
<protein>
    <recommendedName>
        <fullName evidence="5">Sesquiterpene synthase Agr9</fullName>
        <ecNumber evidence="4">4.2.3.-</ecNumber>
        <ecNumber evidence="4">4.2.3.126</ecNumber>
    </recommendedName>
    <alternativeName>
        <fullName evidence="5">Terpene cyclase Agr9</fullName>
    </alternativeName>
</protein>
<sequence length="372" mass="42668">MTAAPLTFTLPDLLANFPWKRNLSEYYPECKTESSAWTESFHPFDDEGLKGFNLCDFNLLASLAYSPREREIIRLGCDLMNIFYVFDEYTDIADGDGADKIRDIIMDAFRNPHKPRPEGELLVGEMARDFWIRASGYVSPDAHCLTHFLRDFDTYTAAVVREADDRAKRVYRTFEDYLSIRRDSSGCLPSFALCEFGLDLPEEAYHHPRMAALREQSTDLIAIGNDIDSYAMEKARGLELHNSVELIINEHGLDVQGAINWLERYAAGVHASFLDNVANMPSWGEDVDRRVKMYIDGLAQWVRGNDDWTFESGRYFGDKGLEVQKTRVMSLLPASKVSLRSRPKAVGHVPKKLLRYFRYSTMYFFGFHVLAK</sequence>
<evidence type="ECO:0000250" key="1">
    <source>
        <dbReference type="UniProtKB" id="P0DL13"/>
    </source>
</evidence>
<evidence type="ECO:0000250" key="2">
    <source>
        <dbReference type="UniProtKB" id="Q9UR08"/>
    </source>
</evidence>
<evidence type="ECO:0000269" key="3">
    <source>
    </source>
</evidence>
<evidence type="ECO:0000269" key="4">
    <source>
    </source>
</evidence>
<evidence type="ECO:0000303" key="5">
    <source>
    </source>
</evidence>
<evidence type="ECO:0000305" key="6"/>
<comment type="function">
    <text evidence="4">Terpene cyclase that catalyzes the cyclization of farnesyl diphosphate (FPP) to various sesquiterpenes, including gamma-muurolene, beta-cadinene and delta-cadinene.</text>
</comment>
<comment type="catalytic activity">
    <reaction evidence="4">
        <text>(2E,6E)-farnesyl diphosphate = gamma-muurolene + diphosphate</text>
        <dbReference type="Rhea" id="RHEA:33107"/>
        <dbReference type="ChEBI" id="CHEBI:33019"/>
        <dbReference type="ChEBI" id="CHEBI:64798"/>
        <dbReference type="ChEBI" id="CHEBI:175763"/>
        <dbReference type="EC" id="4.2.3.126"/>
    </reaction>
    <physiologicalReaction direction="left-to-right" evidence="4">
        <dbReference type="Rhea" id="RHEA:33108"/>
    </physiologicalReaction>
</comment>
<comment type="catalytic activity">
    <reaction evidence="4">
        <text>(2E,6E)-farnesyl diphosphate = delta-cadinene + diphosphate</text>
        <dbReference type="Rhea" id="RHEA:56556"/>
        <dbReference type="ChEBI" id="CHEBI:33019"/>
        <dbReference type="ChEBI" id="CHEBI:140564"/>
        <dbReference type="ChEBI" id="CHEBI:175763"/>
    </reaction>
    <physiologicalReaction direction="left-to-right" evidence="3">
        <dbReference type="Rhea" id="RHEA:56557"/>
    </physiologicalReaction>
</comment>
<comment type="cofactor">
    <cofactor evidence="4">
        <name>Mg(2+)</name>
        <dbReference type="ChEBI" id="CHEBI:18420"/>
    </cofactor>
</comment>
<comment type="domain">
    <text evidence="4">The DDXXD motif is important for the catalytic activity, presumably through binding to Mg(2+).</text>
</comment>
<comment type="similarity">
    <text evidence="6">Belongs to the terpene synthase family.</text>
</comment>
<feature type="chain" id="PRO_0000451263" description="Sesquiterpene synthase Agr9">
    <location>
        <begin position="1"/>
        <end position="372"/>
    </location>
</feature>
<feature type="short sequence motif" description="DDXXD motif" evidence="1">
    <location>
        <begin position="87"/>
        <end position="91"/>
    </location>
</feature>
<feature type="binding site" evidence="2">
    <location>
        <position position="87"/>
    </location>
    <ligand>
        <name>Mg(2+)</name>
        <dbReference type="ChEBI" id="CHEBI:18420"/>
        <label>1</label>
    </ligand>
</feature>
<feature type="binding site" evidence="2">
    <location>
        <position position="87"/>
    </location>
    <ligand>
        <name>Mg(2+)</name>
        <dbReference type="ChEBI" id="CHEBI:18420"/>
        <label>2</label>
    </ligand>
</feature>
<feature type="binding site" evidence="2">
    <location>
        <position position="225"/>
    </location>
    <ligand>
        <name>Mg(2+)</name>
        <dbReference type="ChEBI" id="CHEBI:18420"/>
        <label>3</label>
    </ligand>
</feature>
<feature type="binding site" evidence="2">
    <location>
        <position position="229"/>
    </location>
    <ligand>
        <name>Mg(2+)</name>
        <dbReference type="ChEBI" id="CHEBI:18420"/>
        <label>3</label>
    </ligand>
</feature>
<feature type="binding site" evidence="2">
    <location>
        <position position="233"/>
    </location>
    <ligand>
        <name>Mg(2+)</name>
        <dbReference type="ChEBI" id="CHEBI:18420"/>
        <label>3</label>
    </ligand>
</feature>
<feature type="binding site" evidence="2">
    <location>
        <position position="314"/>
    </location>
    <ligand>
        <name>(2E,6E)-farnesyl diphosphate</name>
        <dbReference type="ChEBI" id="CHEBI:175763"/>
    </ligand>
</feature>
<feature type="binding site" evidence="2">
    <location>
        <position position="315"/>
    </location>
    <ligand>
        <name>(2E,6E)-farnesyl diphosphate</name>
        <dbReference type="ChEBI" id="CHEBI:175763"/>
    </ligand>
</feature>
<proteinExistence type="evidence at protein level"/>
<reference key="1">
    <citation type="journal article" date="2020" name="ACS Chem. Biol.">
        <title>Agrocybe aegerita serves as a gateway for identifying sesquiterpene biosynthetic enzymes in higher fungi.</title>
        <authorList>
            <person name="Zhang C."/>
            <person name="Chen X."/>
            <person name="Orban A."/>
            <person name="Shukal S."/>
            <person name="Birk F."/>
            <person name="Too H.P."/>
            <person name="Ruehl M."/>
        </authorList>
    </citation>
    <scope>NUCLEOTIDE SEQUENCE [GENOMIC DNA]</scope>
    <scope>FUNCTION</scope>
    <scope>DOMAIN</scope>
    <scope>CATALYTIC ACTIVITY</scope>
    <source>
        <strain>AAE3_05024</strain>
    </source>
</reference>
<reference key="2">
    <citation type="journal article" date="2018" name="BMC Genomics">
        <title>The genome sequence of the commercially cultivated mushroom Agrocybe aegerita reveals a conserved repertoire of fruiting-related genes and a versatile suite of biopolymer-degrading enzymes.</title>
        <authorList>
            <person name="Gupta D.K."/>
            <person name="Ruehl M."/>
            <person name="Mishra B."/>
            <person name="Kleofas V."/>
            <person name="Hofrichter M."/>
            <person name="Herzog R."/>
            <person name="Pecyna M.J."/>
            <person name="Sharma R."/>
            <person name="Kellner H."/>
            <person name="Hennicke F."/>
            <person name="Thines M."/>
        </authorList>
    </citation>
    <scope>NUCLEOTIDE SEQUENCE [LARGE SCALE GENOMIC DNA]</scope>
    <source>
        <strain>AAE3_05024</strain>
    </source>
</reference>